<proteinExistence type="evidence at protein level"/>
<accession>B2RID1</accession>
<protein>
    <recommendedName>
        <fullName evidence="6">Asp/Glu-specific dipeptidyl-peptidase</fullName>
        <ecNumber evidence="3 4">3.4.14.-</ecNumber>
    </recommendedName>
    <alternativeName>
        <fullName evidence="6">Dipeptidyl-peptidase 11</fullName>
        <shortName evidence="6">DPP11</shortName>
    </alternativeName>
</protein>
<evidence type="ECO:0000250" key="1">
    <source>
        <dbReference type="UniProtKB" id="V5YM14"/>
    </source>
</evidence>
<evidence type="ECO:0000255" key="2"/>
<evidence type="ECO:0000269" key="3">
    <source>
    </source>
</evidence>
<evidence type="ECO:0000269" key="4">
    <source>
    </source>
</evidence>
<evidence type="ECO:0000269" key="5">
    <source>
    </source>
</evidence>
<evidence type="ECO:0000303" key="6">
    <source>
    </source>
</evidence>
<evidence type="ECO:0000305" key="7"/>
<evidence type="ECO:0000305" key="8">
    <source>
    </source>
</evidence>
<evidence type="ECO:0000305" key="9">
    <source>
    </source>
</evidence>
<evidence type="ECO:0000312" key="10">
    <source>
        <dbReference type="EMBL" id="BAG33126.1"/>
    </source>
</evidence>
<evidence type="ECO:0007744" key="11">
    <source>
        <dbReference type="PDB" id="4XZY"/>
    </source>
</evidence>
<evidence type="ECO:0007744" key="12">
    <source>
        <dbReference type="PDB" id="4Y02"/>
    </source>
</evidence>
<evidence type="ECO:0007744" key="13">
    <source>
        <dbReference type="PDB" id="4Y04"/>
    </source>
</evidence>
<evidence type="ECO:0007829" key="14">
    <source>
        <dbReference type="PDB" id="4XZY"/>
    </source>
</evidence>
<evidence type="ECO:0007829" key="15">
    <source>
        <dbReference type="PDB" id="4Y01"/>
    </source>
</evidence>
<evidence type="ECO:0007829" key="16">
    <source>
        <dbReference type="PDB" id="5JWF"/>
    </source>
</evidence>
<evidence type="ECO:0007829" key="17">
    <source>
        <dbReference type="PDB" id="5SDD"/>
    </source>
</evidence>
<evidence type="ECO:0007829" key="18">
    <source>
        <dbReference type="PDB" id="6JTB"/>
    </source>
</evidence>
<evidence type="ECO:0007829" key="19">
    <source>
        <dbReference type="PDB" id="7R51"/>
    </source>
</evidence>
<gene>
    <name evidence="10" type="primary">dpp11</name>
    <name evidence="10" type="ordered locus">PGN_0607</name>
</gene>
<feature type="signal peptide" evidence="2">
    <location>
        <begin position="1"/>
        <end position="21"/>
    </location>
</feature>
<feature type="chain" id="PRO_5005662231" description="Asp/Glu-specific dipeptidyl-peptidase">
    <location>
        <begin position="22"/>
        <end position="720"/>
    </location>
</feature>
<feature type="active site" description="Charge relay system" evidence="1 9">
    <location>
        <position position="85"/>
    </location>
</feature>
<feature type="active site" description="Charge relay system" evidence="1 9">
    <location>
        <position position="227"/>
    </location>
</feature>
<feature type="active site" description="Charge relay system" evidence="1 8 9">
    <location>
        <position position="655"/>
    </location>
</feature>
<feature type="site" description="Is essential for the Asp/Glu P1 specificity of DPP11; involved in the recognition of the Asp/Glu residue at the P1 position of substrate peptides" evidence="5">
    <location>
        <position position="673"/>
    </location>
</feature>
<feature type="disulfide bond" evidence="5 11 12 13">
    <location>
        <begin position="69"/>
        <end position="86"/>
    </location>
</feature>
<feature type="mutagenesis site" description="Significant increase (or preservation) of the catalytic activity." evidence="5">
    <original>R</original>
    <variation>A</variation>
    <variation>N</variation>
    <location>
        <position position="337"/>
    </location>
</feature>
<feature type="mutagenesis site" description="Loss of catalytic activity." evidence="3">
    <original>S</original>
    <variation>A</variation>
    <location>
        <position position="655"/>
    </location>
</feature>
<feature type="mutagenesis site" description="Loss of catalytic activity." evidence="5">
    <original>R</original>
    <variation>A</variation>
    <location>
        <position position="673"/>
    </location>
</feature>
<feature type="mutagenesis site" description="Drastically decreased but still significant activities against Asp/Glu substrates, as well as detectable activity against substrates harboring hydrophobic residues at the P1 position." evidence="5">
    <original>R</original>
    <variation>G</variation>
    <location>
        <position position="673"/>
    </location>
</feature>
<feature type="mutagenesis site" description="The Asp/Glu preference is inverted, i.e., peptidase activity toward Leu-Asp-MCA nearly disappears, whereas that to Leu-Glu-MCA partially remains." evidence="4">
    <original>R</original>
    <variation>S</variation>
    <location>
        <position position="673"/>
    </location>
</feature>
<feature type="helix" evidence="18">
    <location>
        <begin position="28"/>
        <end position="30"/>
    </location>
</feature>
<feature type="helix" evidence="18">
    <location>
        <begin position="31"/>
        <end position="40"/>
    </location>
</feature>
<feature type="helix" evidence="18">
    <location>
        <begin position="47"/>
        <end position="50"/>
    </location>
</feature>
<feature type="strand" evidence="18">
    <location>
        <begin position="53"/>
        <end position="55"/>
    </location>
</feature>
<feature type="helix" evidence="18">
    <location>
        <begin position="58"/>
        <end position="61"/>
    </location>
</feature>
<feature type="strand" evidence="18">
    <location>
        <begin position="62"/>
        <end position="65"/>
    </location>
</feature>
<feature type="turn" evidence="18">
    <location>
        <begin position="66"/>
        <end position="68"/>
    </location>
</feature>
<feature type="strand" evidence="18">
    <location>
        <begin position="69"/>
        <end position="73"/>
    </location>
</feature>
<feature type="strand" evidence="18">
    <location>
        <begin position="79"/>
        <end position="82"/>
    </location>
</feature>
<feature type="helix" evidence="18">
    <location>
        <begin position="84"/>
        <end position="93"/>
    </location>
</feature>
<feature type="strand" evidence="18">
    <location>
        <begin position="97"/>
        <end position="99"/>
    </location>
</feature>
<feature type="helix" evidence="18">
    <location>
        <begin position="101"/>
        <end position="104"/>
    </location>
</feature>
<feature type="helix" evidence="18">
    <location>
        <begin position="111"/>
        <end position="113"/>
    </location>
</feature>
<feature type="strand" evidence="18">
    <location>
        <begin position="122"/>
        <end position="130"/>
    </location>
</feature>
<feature type="helix" evidence="18">
    <location>
        <begin position="132"/>
        <end position="139"/>
    </location>
</feature>
<feature type="helix" evidence="18">
    <location>
        <begin position="149"/>
        <end position="151"/>
    </location>
</feature>
<feature type="helix" evidence="18">
    <location>
        <begin position="153"/>
        <end position="164"/>
    </location>
</feature>
<feature type="helix" evidence="18">
    <location>
        <begin position="168"/>
        <end position="171"/>
    </location>
</feature>
<feature type="strand" evidence="18">
    <location>
        <begin position="175"/>
        <end position="182"/>
    </location>
</feature>
<feature type="helix" evidence="18">
    <location>
        <begin position="183"/>
        <end position="185"/>
    </location>
</feature>
<feature type="strand" evidence="18">
    <location>
        <begin position="187"/>
        <end position="196"/>
    </location>
</feature>
<feature type="strand" evidence="18">
    <location>
        <begin position="199"/>
        <end position="204"/>
    </location>
</feature>
<feature type="helix" evidence="18">
    <location>
        <begin position="207"/>
        <end position="210"/>
    </location>
</feature>
<feature type="turn" evidence="18">
    <location>
        <begin position="211"/>
        <end position="219"/>
    </location>
</feature>
<feature type="strand" evidence="18">
    <location>
        <begin position="229"/>
        <end position="235"/>
    </location>
</feature>
<feature type="strand" evidence="18">
    <location>
        <begin position="259"/>
        <end position="262"/>
    </location>
</feature>
<feature type="strand" evidence="18">
    <location>
        <begin position="269"/>
        <end position="274"/>
    </location>
</feature>
<feature type="helix" evidence="18">
    <location>
        <begin position="285"/>
        <end position="293"/>
    </location>
</feature>
<feature type="helix" evidence="18">
    <location>
        <begin position="295"/>
        <end position="316"/>
    </location>
</feature>
<feature type="helix" evidence="18">
    <location>
        <begin position="318"/>
        <end position="347"/>
    </location>
</feature>
<feature type="helix" evidence="18">
    <location>
        <begin position="350"/>
        <end position="367"/>
    </location>
</feature>
<feature type="helix" evidence="18">
    <location>
        <begin position="372"/>
        <end position="400"/>
    </location>
</feature>
<feature type="turn" evidence="18">
    <location>
        <begin position="401"/>
        <end position="404"/>
    </location>
</feature>
<feature type="helix" evidence="18">
    <location>
        <begin position="406"/>
        <end position="409"/>
    </location>
</feature>
<feature type="helix" evidence="18">
    <location>
        <begin position="415"/>
        <end position="420"/>
    </location>
</feature>
<feature type="strand" evidence="15">
    <location>
        <begin position="422"/>
        <end position="424"/>
    </location>
</feature>
<feature type="helix" evidence="18">
    <location>
        <begin position="426"/>
        <end position="443"/>
    </location>
</feature>
<feature type="helix" evidence="18">
    <location>
        <begin position="450"/>
        <end position="467"/>
    </location>
</feature>
<feature type="helix" evidence="18">
    <location>
        <begin position="470"/>
        <end position="472"/>
    </location>
</feature>
<feature type="helix" evidence="18">
    <location>
        <begin position="475"/>
        <end position="478"/>
    </location>
</feature>
<feature type="helix" evidence="18">
    <location>
        <begin position="479"/>
        <end position="484"/>
    </location>
</feature>
<feature type="helix" evidence="18">
    <location>
        <begin position="488"/>
        <end position="498"/>
    </location>
</feature>
<feature type="helix" evidence="18">
    <location>
        <begin position="504"/>
        <end position="512"/>
    </location>
</feature>
<feature type="helix" evidence="18">
    <location>
        <begin position="516"/>
        <end position="520"/>
    </location>
</feature>
<feature type="helix" evidence="18">
    <location>
        <begin position="523"/>
        <end position="542"/>
    </location>
</feature>
<feature type="helix" evidence="18">
    <location>
        <begin position="543"/>
        <end position="545"/>
    </location>
</feature>
<feature type="helix" evidence="18">
    <location>
        <begin position="546"/>
        <end position="564"/>
    </location>
</feature>
<feature type="strand" evidence="17">
    <location>
        <begin position="566"/>
        <end position="568"/>
    </location>
</feature>
<feature type="strand" evidence="14">
    <location>
        <begin position="574"/>
        <end position="576"/>
    </location>
</feature>
<feature type="strand" evidence="18">
    <location>
        <begin position="578"/>
        <end position="584"/>
    </location>
</feature>
<feature type="strand" evidence="18">
    <location>
        <begin position="587"/>
        <end position="590"/>
    </location>
</feature>
<feature type="strand" evidence="18">
    <location>
        <begin position="593"/>
        <end position="595"/>
    </location>
</feature>
<feature type="strand" evidence="18">
    <location>
        <begin position="597"/>
        <end position="600"/>
    </location>
</feature>
<feature type="helix" evidence="18">
    <location>
        <begin position="601"/>
        <end position="607"/>
    </location>
</feature>
<feature type="helix" evidence="18">
    <location>
        <begin position="613"/>
        <end position="615"/>
    </location>
</feature>
<feature type="helix" evidence="18">
    <location>
        <begin position="619"/>
        <end position="627"/>
    </location>
</feature>
<feature type="helix" evidence="19">
    <location>
        <begin position="631"/>
        <end position="633"/>
    </location>
</feature>
<feature type="strand" evidence="16">
    <location>
        <begin position="636"/>
        <end position="638"/>
    </location>
</feature>
<feature type="strand" evidence="18">
    <location>
        <begin position="641"/>
        <end position="646"/>
    </location>
</feature>
<feature type="strand" evidence="18">
    <location>
        <begin position="658"/>
        <end position="660"/>
    </location>
</feature>
<feature type="strand" evidence="18">
    <location>
        <begin position="666"/>
        <end position="673"/>
    </location>
</feature>
<feature type="helix" evidence="18">
    <location>
        <begin position="675"/>
        <end position="681"/>
    </location>
</feature>
<feature type="turn" evidence="18">
    <location>
        <begin position="686"/>
        <end position="688"/>
    </location>
</feature>
<feature type="strand" evidence="18">
    <location>
        <begin position="691"/>
        <end position="695"/>
    </location>
</feature>
<feature type="helix" evidence="18">
    <location>
        <begin position="696"/>
        <end position="705"/>
    </location>
</feature>
<feature type="helix" evidence="18">
    <location>
        <begin position="710"/>
        <end position="715"/>
    </location>
</feature>
<keyword id="KW-0002">3D-structure</keyword>
<keyword id="KW-0031">Aminopeptidase</keyword>
<keyword id="KW-1015">Disulfide bond</keyword>
<keyword id="KW-0378">Hydrolase</keyword>
<keyword id="KW-0645">Protease</keyword>
<keyword id="KW-0720">Serine protease</keyword>
<keyword id="KW-0732">Signal</keyword>
<dbReference type="EC" id="3.4.14.-" evidence="3 4"/>
<dbReference type="EMBL" id="BR000944">
    <property type="protein sequence ID" value="FAA00730.1"/>
    <property type="molecule type" value="Genomic_DNA"/>
</dbReference>
<dbReference type="EMBL" id="AP009380">
    <property type="protein sequence ID" value="BAG33126.1"/>
    <property type="molecule type" value="Genomic_DNA"/>
</dbReference>
<dbReference type="RefSeq" id="WP_012457641.1">
    <property type="nucleotide sequence ID" value="NC_010729.1"/>
</dbReference>
<dbReference type="PDB" id="4XZY">
    <property type="method" value="X-ray"/>
    <property type="resolution" value="2.70 A"/>
    <property type="chains" value="A/B=1-720"/>
</dbReference>
<dbReference type="PDB" id="4Y01">
    <property type="method" value="X-ray"/>
    <property type="resolution" value="2.46 A"/>
    <property type="chains" value="A/B=1-720"/>
</dbReference>
<dbReference type="PDB" id="4Y02">
    <property type="method" value="X-ray"/>
    <property type="resolution" value="1.96 A"/>
    <property type="chains" value="A=1-720"/>
</dbReference>
<dbReference type="PDB" id="4Y04">
    <property type="method" value="X-ray"/>
    <property type="resolution" value="1.66 A"/>
    <property type="chains" value="A=1-720"/>
</dbReference>
<dbReference type="PDB" id="5JWF">
    <property type="method" value="X-ray"/>
    <property type="resolution" value="2.40 A"/>
    <property type="chains" value="A/B=22-720"/>
</dbReference>
<dbReference type="PDB" id="5SDC">
    <property type="method" value="X-ray"/>
    <property type="resolution" value="1.93 A"/>
    <property type="chains" value="A/B=22-720"/>
</dbReference>
<dbReference type="PDB" id="5SDD">
    <property type="method" value="X-ray"/>
    <property type="resolution" value="1.84 A"/>
    <property type="chains" value="A/B=22-720"/>
</dbReference>
<dbReference type="PDB" id="5SDE">
    <property type="method" value="X-ray"/>
    <property type="resolution" value="1.85 A"/>
    <property type="chains" value="A/B=22-720"/>
</dbReference>
<dbReference type="PDB" id="5SDF">
    <property type="method" value="X-ray"/>
    <property type="resolution" value="1.88 A"/>
    <property type="chains" value="A/B=22-720"/>
</dbReference>
<dbReference type="PDB" id="5SDG">
    <property type="method" value="X-ray"/>
    <property type="resolution" value="1.95 A"/>
    <property type="chains" value="A/B=22-720"/>
</dbReference>
<dbReference type="PDB" id="5SDH">
    <property type="method" value="X-ray"/>
    <property type="resolution" value="2.31 A"/>
    <property type="chains" value="A/B=22-720"/>
</dbReference>
<dbReference type="PDB" id="5SDI">
    <property type="method" value="X-ray"/>
    <property type="resolution" value="1.90 A"/>
    <property type="chains" value="A/B=22-720"/>
</dbReference>
<dbReference type="PDB" id="5SDJ">
    <property type="method" value="X-ray"/>
    <property type="resolution" value="2.04 A"/>
    <property type="chains" value="A/B=22-720"/>
</dbReference>
<dbReference type="PDB" id="5SDK">
    <property type="method" value="X-ray"/>
    <property type="resolution" value="1.98 A"/>
    <property type="chains" value="A/B=22-720"/>
</dbReference>
<dbReference type="PDB" id="5SDL">
    <property type="method" value="X-ray"/>
    <property type="resolution" value="2.44 A"/>
    <property type="chains" value="A/B=22-720"/>
</dbReference>
<dbReference type="PDB" id="5SDM">
    <property type="method" value="X-ray"/>
    <property type="resolution" value="2.04 A"/>
    <property type="chains" value="A/B=22-720"/>
</dbReference>
<dbReference type="PDB" id="5SDN">
    <property type="method" value="X-ray"/>
    <property type="resolution" value="2.02 A"/>
    <property type="chains" value="A/B=22-720"/>
</dbReference>
<dbReference type="PDB" id="5SDO">
    <property type="method" value="X-ray"/>
    <property type="resolution" value="2.05 A"/>
    <property type="chains" value="A/B=22-720"/>
</dbReference>
<dbReference type="PDB" id="5SDP">
    <property type="method" value="X-ray"/>
    <property type="resolution" value="2.19 A"/>
    <property type="chains" value="A/B=22-720"/>
</dbReference>
<dbReference type="PDB" id="5SDQ">
    <property type="method" value="X-ray"/>
    <property type="resolution" value="1.92 A"/>
    <property type="chains" value="A/B=22-720"/>
</dbReference>
<dbReference type="PDB" id="5SDR">
    <property type="method" value="X-ray"/>
    <property type="resolution" value="2.08 A"/>
    <property type="chains" value="A/B=22-720"/>
</dbReference>
<dbReference type="PDB" id="5SDS">
    <property type="method" value="X-ray"/>
    <property type="resolution" value="1.91 A"/>
    <property type="chains" value="A/B=22-720"/>
</dbReference>
<dbReference type="PDB" id="6JTB">
    <property type="method" value="X-ray"/>
    <property type="resolution" value="1.50 A"/>
    <property type="chains" value="A=1-720"/>
</dbReference>
<dbReference type="PDB" id="6JTC">
    <property type="method" value="X-ray"/>
    <property type="resolution" value="2.39 A"/>
    <property type="chains" value="A/B=1-720"/>
</dbReference>
<dbReference type="PDB" id="7R51">
    <property type="method" value="X-ray"/>
    <property type="resolution" value="1.81 A"/>
    <property type="chains" value="A/B=22-720"/>
</dbReference>
<dbReference type="PDBsum" id="4XZY"/>
<dbReference type="PDBsum" id="4Y01"/>
<dbReference type="PDBsum" id="4Y02"/>
<dbReference type="PDBsum" id="4Y04"/>
<dbReference type="PDBsum" id="5JWF"/>
<dbReference type="PDBsum" id="5SDC"/>
<dbReference type="PDBsum" id="5SDD"/>
<dbReference type="PDBsum" id="5SDE"/>
<dbReference type="PDBsum" id="5SDF"/>
<dbReference type="PDBsum" id="5SDG"/>
<dbReference type="PDBsum" id="5SDH"/>
<dbReference type="PDBsum" id="5SDI"/>
<dbReference type="PDBsum" id="5SDJ"/>
<dbReference type="PDBsum" id="5SDK"/>
<dbReference type="PDBsum" id="5SDL"/>
<dbReference type="PDBsum" id="5SDM"/>
<dbReference type="PDBsum" id="5SDN"/>
<dbReference type="PDBsum" id="5SDO"/>
<dbReference type="PDBsum" id="5SDP"/>
<dbReference type="PDBsum" id="5SDQ"/>
<dbReference type="PDBsum" id="5SDR"/>
<dbReference type="PDBsum" id="5SDS"/>
<dbReference type="PDBsum" id="6JTB"/>
<dbReference type="PDBsum" id="6JTC"/>
<dbReference type="PDBsum" id="7R51"/>
<dbReference type="SMR" id="B2RID1"/>
<dbReference type="MEROPS" id="S46.002"/>
<dbReference type="GeneID" id="29255834"/>
<dbReference type="KEGG" id="pgn:PGN_0607"/>
<dbReference type="eggNOG" id="COG3591">
    <property type="taxonomic scope" value="Bacteria"/>
</dbReference>
<dbReference type="HOGENOM" id="CLU_013776_0_0_10"/>
<dbReference type="OrthoDB" id="9805367at2"/>
<dbReference type="BioCyc" id="PGIN431947:G1G2V-668-MONOMER"/>
<dbReference type="EvolutionaryTrace" id="B2RID1"/>
<dbReference type="Proteomes" id="UP000008842">
    <property type="component" value="Chromosome"/>
</dbReference>
<dbReference type="GO" id="GO:0009986">
    <property type="term" value="C:cell surface"/>
    <property type="evidence" value="ECO:0000314"/>
    <property type="project" value="UniProtKB"/>
</dbReference>
<dbReference type="GO" id="GO:0008239">
    <property type="term" value="F:dipeptidyl-peptidase activity"/>
    <property type="evidence" value="ECO:0000314"/>
    <property type="project" value="UniProtKB"/>
</dbReference>
<dbReference type="GO" id="GO:0042277">
    <property type="term" value="F:peptide binding"/>
    <property type="evidence" value="ECO:0000314"/>
    <property type="project" value="UniProtKB"/>
</dbReference>
<dbReference type="GO" id="GO:0070009">
    <property type="term" value="F:serine-type aminopeptidase activity"/>
    <property type="evidence" value="ECO:0007669"/>
    <property type="project" value="InterPro"/>
</dbReference>
<dbReference type="GO" id="GO:0048588">
    <property type="term" value="P:developmental cell growth"/>
    <property type="evidence" value="ECO:0000315"/>
    <property type="project" value="UniProtKB"/>
</dbReference>
<dbReference type="GO" id="GO:0043171">
    <property type="term" value="P:peptide catabolic process"/>
    <property type="evidence" value="ECO:0000314"/>
    <property type="project" value="UniProtKB"/>
</dbReference>
<dbReference type="GO" id="GO:0006508">
    <property type="term" value="P:proteolysis"/>
    <property type="evidence" value="ECO:0007669"/>
    <property type="project" value="UniProtKB-KW"/>
</dbReference>
<dbReference type="Gene3D" id="2.40.10.10">
    <property type="entry name" value="Trypsin-like serine proteases"/>
    <property type="match status" value="1"/>
</dbReference>
<dbReference type="InterPro" id="IPR019500">
    <property type="entry name" value="Pep_S46"/>
</dbReference>
<dbReference type="InterPro" id="IPR009003">
    <property type="entry name" value="Peptidase_S1_PA"/>
</dbReference>
<dbReference type="InterPro" id="IPR043504">
    <property type="entry name" value="Peptidase_S1_PA_chymotrypsin"/>
</dbReference>
<dbReference type="PANTHER" id="PTHR38469">
    <property type="entry name" value="PERIPLASMIC PEPTIDASE SUBFAMILY S1B"/>
    <property type="match status" value="1"/>
</dbReference>
<dbReference type="PANTHER" id="PTHR38469:SF1">
    <property type="entry name" value="PERIPLASMIC PEPTIDASE SUBFAMILY S1B"/>
    <property type="match status" value="1"/>
</dbReference>
<dbReference type="Pfam" id="PF10459">
    <property type="entry name" value="Peptidase_S46"/>
    <property type="match status" value="1"/>
</dbReference>
<dbReference type="SUPFAM" id="SSF50494">
    <property type="entry name" value="Trypsin-like serine proteases"/>
    <property type="match status" value="1"/>
</dbReference>
<sequence length="720" mass="81938">MKKRLLLPLFAALCLSQIAHADEGMWLMQQLGRKYAQMKERGLKMKEYDLYNPNGTSLKDAVVLFDGGCTGEVVSDRGLVLTNHHCGYDMIQAHSTLEHNYLENGFWAMREADELPNKDISVVFIDKIEDVTDYVKKELKAIKDPNSMDYLSPKYLQKLADKKAGKNFSAKNPGLSVEIKAFYGGNLYLMFTKKTYTDVRLVGAPPSSIGKFGADTDNWIWPRHTGDFSIFRIYADKNGNPAPYSEDNVPLKPKRFFNISLGGVQENDYAMIMGFPGTTHRYFTASEVDEWKSIDNDIRIRMRDIRQGVMLREMLADPQIKIMYSAKYAASQNAYKRAIGANWAIKTRGLRQNKQAMQDRLIAWGAKQGTPRYEEAVHEIDATVAKRADLRRRYWMIEEGIIRGIEFARSPIPTEDETKALQGNDASARKEAIDKIRTRYSKFANKDYSAEVDKKVAVAMLTEYLKEIPYENLPLHLRLVKDRFAGDVQAYVDDIFARSVFGSEAQFDAFAAVPSVEKLAEDPMVLFASSVFDEYRKLYNELRPYDDPILRAQRTYIAGLLEMDGDQDQFPDANLTLRFTYGQVKGYSPRDNVYYGHQTTLDGVMEKEDPDNWEFVVDPKLKAVYERKDFGRYADRSGRMPVAFCATTHTTGGNSGSPVMNANGELIGLNFDRNWEGVGGDIQYLADYQRSIIVDIRYVLLVIDKVGGCQRLLDEMNIVP</sequence>
<organism>
    <name type="scientific">Porphyromonas gingivalis (strain ATCC 33277 / DSM 20709 / CIP 103683 / JCM 12257 / NCTC 11834 / 2561)</name>
    <dbReference type="NCBI Taxonomy" id="431947"/>
    <lineage>
        <taxon>Bacteria</taxon>
        <taxon>Pseudomonadati</taxon>
        <taxon>Bacteroidota</taxon>
        <taxon>Bacteroidia</taxon>
        <taxon>Bacteroidales</taxon>
        <taxon>Porphyromonadaceae</taxon>
        <taxon>Porphyromonas</taxon>
    </lineage>
</organism>
<name>DPP11_PORG3</name>
<comment type="function">
    <text evidence="3 4">Catalyzes the removal of dipeptides from the N-terminus of oligopeptides. Shows a strict specificity for acidic residues (Asp or Glu) in the P1 position, and has a hydrophobic residue preference at the P2 position. Preferentially cleaves the synthetic substrate Leu-Asp-methylcoumaryl-7-amide (Leu-Asp-MCA) as compared to Leu-Glu-MCA. Is involved in amino acid metabolism and bacterial growth of asaccharolytic P.gingivalis, that utilizes amino acids from extracellular proteinaceous nutrients as energy and carbon sources.</text>
</comment>
<comment type="activity regulation">
    <text evidence="3">Enzyme activity is completely blocked by diisopropyl-fluorophosphates, moderately by phenylmethylsulfonyl fluoride (PMSF) and 4-(2-methyl)benzenesulfonyl fluoride, and slightly by pepstatin in vitro.</text>
</comment>
<comment type="biophysicochemical properties">
    <phDependence>
        <text evidence="3">Optimum pH is 7.0.</text>
    </phDependence>
</comment>
<comment type="subunit">
    <text evidence="5">Homodimer.</text>
</comment>
<comment type="subcellular location">
    <subcellularLocation>
        <location evidence="3">Cell surface</location>
    </subcellularLocation>
    <text evidence="3">Is exclusively cell-associated.</text>
</comment>
<comment type="disruption phenotype">
    <text evidence="3">Cell growth is retarded. Complete loss of hydrolysis for ac-DNLD- and LE-MCA. The efficiency of peptide utilization of proteinaceous nutrients is reduced in mutant cells.</text>
</comment>
<comment type="similarity">
    <text evidence="7">Belongs to the peptidase S46 family.</text>
</comment>
<reference key="1">
    <citation type="journal article" date="2011" name="J. Biol. Chem.">
        <title>Asp- and Glu-specific novel dipeptidyl peptidase 11 of Porphyromonas gingivalis ensures utilization of proteinaceous energy sources.</title>
        <authorList>
            <person name="Ohara-Nemoto Y."/>
            <person name="Shimoyama Y."/>
            <person name="Kimura S."/>
            <person name="Kon A."/>
            <person name="Haraga H."/>
            <person name="Ono T."/>
            <person name="Nemoto T.K."/>
        </authorList>
    </citation>
    <scope>NUCLEOTIDE SEQUENCE [GENOMIC DNA]</scope>
    <scope>FUNCTION</scope>
    <scope>CATALYTIC ACTIVITY</scope>
    <scope>SUBSTRATE SPECIFICITY</scope>
    <scope>BIOPHYSICOCHEMICAL PROPERTIES</scope>
    <scope>ACTIVITY REGULATION</scope>
    <scope>SUBCELLULAR LOCATION</scope>
    <scope>DISRUPTION PHENOTYPE</scope>
    <scope>MUTAGENESIS OF SER-655</scope>
    <source>
        <strain>ATCC 33277 / DSM 20709 / CIP 103683 / JCM 12257 / NCTC 11834 / 2561</strain>
    </source>
</reference>
<reference key="2">
    <citation type="journal article" date="2008" name="DNA Res.">
        <title>Determination of the genome sequence of Porphyromonas gingivalis strain ATCC 33277 and genomic comparison with strain W83 revealed extensive genome rearrangements in P. gingivalis.</title>
        <authorList>
            <person name="Naito M."/>
            <person name="Hirakawa H."/>
            <person name="Yamashita A."/>
            <person name="Ohara N."/>
            <person name="Shoji M."/>
            <person name="Yukitake H."/>
            <person name="Nakayama K."/>
            <person name="Toh H."/>
            <person name="Yoshimura F."/>
            <person name="Kuhara S."/>
            <person name="Hattori M."/>
            <person name="Hayashi T."/>
            <person name="Nakayama K."/>
        </authorList>
    </citation>
    <scope>NUCLEOTIDE SEQUENCE [LARGE SCALE GENOMIC DNA]</scope>
    <source>
        <strain>ATCC 33277 / DSM 20709 / CIP 103683 / JCM 12257 / NCTC 11834 / 2561</strain>
    </source>
</reference>
<reference key="3">
    <citation type="journal article" date="2013" name="Biochimie">
        <title>Discrimination based on Gly and Arg/Ser at position 673 between dipeptidyl-peptidase (DPP) 7 and DPP11, widely distributed DPPs in pathogenic and environmental gram-negative bacteria.</title>
        <authorList>
            <person name="Rouf S.M."/>
            <person name="Ohara-Nemoto Y."/>
            <person name="Hoshino T."/>
            <person name="Fujiwara T."/>
            <person name="Ono T."/>
            <person name="Nemoto T.K."/>
        </authorList>
    </citation>
    <scope>FUNCTION</scope>
    <scope>CATALYTIC ACTIVITY</scope>
    <scope>SUBSTRATE SPECIFICITY</scope>
    <scope>MUTAGENESIS OF ARG-673</scope>
    <source>
        <strain>ATCC 33277 / DSM 20709 / CIP 103683 / JCM 12257 / NCTC 11834 / 2561</strain>
    </source>
</reference>
<reference key="4">
    <citation type="journal article" date="2015" name="Sci. Rep.">
        <title>Structural and mutational analyses of dipeptidyl peptidase 11 from Porphyromonas gingivalis reveal the molecular basis for strict substrate specificity.</title>
        <authorList>
            <person name="Sakamoto Y."/>
            <person name="Suzuki Y."/>
            <person name="Iizuka I."/>
            <person name="Tateoka C."/>
            <person name="Roppongi S."/>
            <person name="Fujimoto M."/>
            <person name="Inaka K."/>
            <person name="Tanaka H."/>
            <person name="Yamada M."/>
            <person name="Ohta K."/>
            <person name="Gouda H."/>
            <person name="Nonaka T."/>
            <person name="Ogasawara W."/>
            <person name="Tanaka N."/>
        </authorList>
    </citation>
    <scope>X-RAY CRYSTALLOGRAPHY (1.66 ANGSTROMS)</scope>
    <scope>DISULFIDE BOND</scope>
    <scope>SUBUNIT</scope>
    <scope>MUTAGENESIS OF ARG-337 AND ARG-673</scope>
</reference>